<dbReference type="EC" id="6.3.5.3" evidence="1"/>
<dbReference type="EMBL" id="CP000777">
    <property type="protein sequence ID" value="ABZ94594.1"/>
    <property type="molecule type" value="Genomic_DNA"/>
</dbReference>
<dbReference type="RefSeq" id="WP_012389126.1">
    <property type="nucleotide sequence ID" value="NC_010842.1"/>
</dbReference>
<dbReference type="SMR" id="B0SB88"/>
<dbReference type="KEGG" id="lbf:LBF_2099"/>
<dbReference type="HOGENOM" id="CLU_003100_0_1_12"/>
<dbReference type="UniPathway" id="UPA00074">
    <property type="reaction ID" value="UER00128"/>
</dbReference>
<dbReference type="GO" id="GO:0005737">
    <property type="term" value="C:cytoplasm"/>
    <property type="evidence" value="ECO:0007669"/>
    <property type="project" value="UniProtKB-SubCell"/>
</dbReference>
<dbReference type="GO" id="GO:0005524">
    <property type="term" value="F:ATP binding"/>
    <property type="evidence" value="ECO:0007669"/>
    <property type="project" value="UniProtKB-UniRule"/>
</dbReference>
<dbReference type="GO" id="GO:0000287">
    <property type="term" value="F:magnesium ion binding"/>
    <property type="evidence" value="ECO:0007669"/>
    <property type="project" value="UniProtKB-UniRule"/>
</dbReference>
<dbReference type="GO" id="GO:0004642">
    <property type="term" value="F:phosphoribosylformylglycinamidine synthase activity"/>
    <property type="evidence" value="ECO:0007669"/>
    <property type="project" value="UniProtKB-UniRule"/>
</dbReference>
<dbReference type="GO" id="GO:0006189">
    <property type="term" value="P:'de novo' IMP biosynthetic process"/>
    <property type="evidence" value="ECO:0007669"/>
    <property type="project" value="UniProtKB-UniRule"/>
</dbReference>
<dbReference type="CDD" id="cd02203">
    <property type="entry name" value="PurL_repeat1"/>
    <property type="match status" value="1"/>
</dbReference>
<dbReference type="CDD" id="cd02204">
    <property type="entry name" value="PurL_repeat2"/>
    <property type="match status" value="1"/>
</dbReference>
<dbReference type="FunFam" id="3.30.1330.10:FF:000004">
    <property type="entry name" value="Phosphoribosylformylglycinamidine synthase subunit PurL"/>
    <property type="match status" value="1"/>
</dbReference>
<dbReference type="Gene3D" id="3.90.650.10">
    <property type="entry name" value="PurM-like C-terminal domain"/>
    <property type="match status" value="2"/>
</dbReference>
<dbReference type="Gene3D" id="3.30.1330.10">
    <property type="entry name" value="PurM-like, N-terminal domain"/>
    <property type="match status" value="2"/>
</dbReference>
<dbReference type="HAMAP" id="MF_00420">
    <property type="entry name" value="PurL_2"/>
    <property type="match status" value="1"/>
</dbReference>
<dbReference type="InterPro" id="IPR010074">
    <property type="entry name" value="PRibForGlyAmidine_synth_PurL"/>
</dbReference>
<dbReference type="InterPro" id="IPR041609">
    <property type="entry name" value="PurL_linker"/>
</dbReference>
<dbReference type="InterPro" id="IPR010918">
    <property type="entry name" value="PurM-like_C_dom"/>
</dbReference>
<dbReference type="InterPro" id="IPR036676">
    <property type="entry name" value="PurM-like_C_sf"/>
</dbReference>
<dbReference type="InterPro" id="IPR016188">
    <property type="entry name" value="PurM-like_N"/>
</dbReference>
<dbReference type="InterPro" id="IPR036921">
    <property type="entry name" value="PurM-like_N_sf"/>
</dbReference>
<dbReference type="NCBIfam" id="TIGR01736">
    <property type="entry name" value="FGAM_synth_II"/>
    <property type="match status" value="1"/>
</dbReference>
<dbReference type="NCBIfam" id="NF002290">
    <property type="entry name" value="PRK01213.1"/>
    <property type="match status" value="1"/>
</dbReference>
<dbReference type="PANTHER" id="PTHR43555">
    <property type="entry name" value="PHOSPHORIBOSYLFORMYLGLYCINAMIDINE SYNTHASE SUBUNIT PURL"/>
    <property type="match status" value="1"/>
</dbReference>
<dbReference type="PANTHER" id="PTHR43555:SF1">
    <property type="entry name" value="PHOSPHORIBOSYLFORMYLGLYCINAMIDINE SYNTHASE SUBUNIT PURL"/>
    <property type="match status" value="1"/>
</dbReference>
<dbReference type="Pfam" id="PF00586">
    <property type="entry name" value="AIRS"/>
    <property type="match status" value="2"/>
</dbReference>
<dbReference type="Pfam" id="PF02769">
    <property type="entry name" value="AIRS_C"/>
    <property type="match status" value="2"/>
</dbReference>
<dbReference type="Pfam" id="PF18072">
    <property type="entry name" value="FGAR-AT_linker"/>
    <property type="match status" value="1"/>
</dbReference>
<dbReference type="PIRSF" id="PIRSF001587">
    <property type="entry name" value="FGAM_synthase_II"/>
    <property type="match status" value="1"/>
</dbReference>
<dbReference type="SUPFAM" id="SSF56042">
    <property type="entry name" value="PurM C-terminal domain-like"/>
    <property type="match status" value="2"/>
</dbReference>
<dbReference type="SUPFAM" id="SSF55326">
    <property type="entry name" value="PurM N-terminal domain-like"/>
    <property type="match status" value="2"/>
</dbReference>
<proteinExistence type="inferred from homology"/>
<protein>
    <recommendedName>
        <fullName evidence="1">Phosphoribosylformylglycinamidine synthase subunit PurL</fullName>
        <shortName evidence="1">FGAM synthase</shortName>
        <ecNumber evidence="1">6.3.5.3</ecNumber>
    </recommendedName>
    <alternativeName>
        <fullName evidence="1">Formylglycinamide ribonucleotide amidotransferase subunit II</fullName>
        <shortName evidence="1">FGAR amidotransferase II</shortName>
        <shortName evidence="1">FGAR-AT II</shortName>
    </alternativeName>
    <alternativeName>
        <fullName evidence="1">Glutamine amidotransferase PurL</fullName>
    </alternativeName>
    <alternativeName>
        <fullName evidence="1">Phosphoribosylformylglycinamidine synthase subunit II</fullName>
    </alternativeName>
</protein>
<comment type="function">
    <text evidence="1">Part of the phosphoribosylformylglycinamidine synthase complex involved in the purines biosynthetic pathway. Catalyzes the ATP-dependent conversion of formylglycinamide ribonucleotide (FGAR) and glutamine to yield formylglycinamidine ribonucleotide (FGAM) and glutamate. The FGAM synthase complex is composed of three subunits. PurQ produces an ammonia molecule by converting glutamine to glutamate. PurL transfers the ammonia molecule to FGAR to form FGAM in an ATP-dependent manner. PurS interacts with PurQ and PurL and is thought to assist in the transfer of the ammonia molecule from PurQ to PurL.</text>
</comment>
<comment type="catalytic activity">
    <reaction evidence="1">
        <text>N(2)-formyl-N(1)-(5-phospho-beta-D-ribosyl)glycinamide + L-glutamine + ATP + H2O = 2-formamido-N(1)-(5-O-phospho-beta-D-ribosyl)acetamidine + L-glutamate + ADP + phosphate + H(+)</text>
        <dbReference type="Rhea" id="RHEA:17129"/>
        <dbReference type="ChEBI" id="CHEBI:15377"/>
        <dbReference type="ChEBI" id="CHEBI:15378"/>
        <dbReference type="ChEBI" id="CHEBI:29985"/>
        <dbReference type="ChEBI" id="CHEBI:30616"/>
        <dbReference type="ChEBI" id="CHEBI:43474"/>
        <dbReference type="ChEBI" id="CHEBI:58359"/>
        <dbReference type="ChEBI" id="CHEBI:147286"/>
        <dbReference type="ChEBI" id="CHEBI:147287"/>
        <dbReference type="ChEBI" id="CHEBI:456216"/>
        <dbReference type="EC" id="6.3.5.3"/>
    </reaction>
</comment>
<comment type="pathway">
    <text evidence="1">Purine metabolism; IMP biosynthesis via de novo pathway; 5-amino-1-(5-phospho-D-ribosyl)imidazole from N(2)-formyl-N(1)-(5-phospho-D-ribosyl)glycinamide: step 1/2.</text>
</comment>
<comment type="subunit">
    <text evidence="1">Monomer. Part of the FGAM synthase complex composed of 1 PurL, 1 PurQ and 2 PurS subunits.</text>
</comment>
<comment type="subcellular location">
    <subcellularLocation>
        <location evidence="1">Cytoplasm</location>
    </subcellularLocation>
</comment>
<comment type="similarity">
    <text evidence="1">Belongs to the FGAMS family.</text>
</comment>
<reference key="1">
    <citation type="journal article" date="2008" name="PLoS ONE">
        <title>Genome sequence of the saprophyte Leptospira biflexa provides insights into the evolution of Leptospira and the pathogenesis of leptospirosis.</title>
        <authorList>
            <person name="Picardeau M."/>
            <person name="Bulach D.M."/>
            <person name="Bouchier C."/>
            <person name="Zuerner R.L."/>
            <person name="Zidane N."/>
            <person name="Wilson P.J."/>
            <person name="Creno S."/>
            <person name="Kuczek E.S."/>
            <person name="Bommezzadri S."/>
            <person name="Davis J.C."/>
            <person name="McGrath A."/>
            <person name="Johnson M.J."/>
            <person name="Boursaux-Eude C."/>
            <person name="Seemann T."/>
            <person name="Rouy Z."/>
            <person name="Coppel R.L."/>
            <person name="Rood J.I."/>
            <person name="Lajus A."/>
            <person name="Davies J.K."/>
            <person name="Medigue C."/>
            <person name="Adler B."/>
        </authorList>
    </citation>
    <scope>NUCLEOTIDE SEQUENCE [LARGE SCALE GENOMIC DNA]</scope>
    <source>
        <strain>Patoc 1 / Ames</strain>
    </source>
</reference>
<name>PURL_LEPBA</name>
<organism>
    <name type="scientific">Leptospira biflexa serovar Patoc (strain Patoc 1 / Ames)</name>
    <dbReference type="NCBI Taxonomy" id="355278"/>
    <lineage>
        <taxon>Bacteria</taxon>
        <taxon>Pseudomonadati</taxon>
        <taxon>Spirochaetota</taxon>
        <taxon>Spirochaetia</taxon>
        <taxon>Leptospirales</taxon>
        <taxon>Leptospiraceae</taxon>
        <taxon>Leptospira</taxon>
    </lineage>
</organism>
<gene>
    <name evidence="1" type="primary">purL</name>
    <name type="ordered locus">LBF_2099</name>
</gene>
<accession>B0SB88</accession>
<sequence length="748" mass="80636">MEKEKVSLADAKEHGLTETEFVEIQKILGRIPNSTELGIFSAMWSEHCSYKNSILKLKTLPTKSDKLLAGAGEENAGAMDIGDGLAVVFKIESHNHPTAVEPYQGAATGVGGIMRDIFTMGARPITSLNSLRFGDPKEPRNKYLLTRAVKGIGDYGNSLGIAVGGGELFLHPTFTKNPLVNAMTVGIAKHDEMASASTKGKVGNKVYIVGATTGRDGIHGASFASKDLTKESEEKRSAVQVGDPFMEKLLMEASLEAIQKKLLVGIQDMGAAGISCATSEMSAKGKTGMDVDLDKVPLREADMNAYEIMLSESQERMLVIPEVGKEGELVSIFHKWGLNAVEIGTVTADGILRIRKNGTLKAEIPAESLVLGGGAPRYVREEKRPTYLDEVVKFDPNKIPDLKPDTVPQTLNSLLSSLNISSRRPLYEQYDTEVGLVKVVEPGEDGGLVRIPGTKKGIAVATDCNSRYTYLNPYEGAQIAVCESARNVAATGAEPYGVTNNLNFGNPYIPENYYVFSECVRGLGDACRFLGLPVTGGNVSFYNESPEGPVFPTPTIGMVGVIDDVAKGLRTYPRTKEDVKYALVGNFQPTISASEYLYRSQGLDTGAIPNISLEKEKQTMDALIECRKNGLLTSAKDLSLGGLLVALAKIVIAGKKGVEVNLNELQTKVPRLDALCFGETGASFIVSFLPNDETKVRESFTSKGLSVYTLGSSSAKASLSVKGDGFHWEWTTKSLEVEFESGLKSYFE</sequence>
<keyword id="KW-0067">ATP-binding</keyword>
<keyword id="KW-0963">Cytoplasm</keyword>
<keyword id="KW-0436">Ligase</keyword>
<keyword id="KW-0460">Magnesium</keyword>
<keyword id="KW-0479">Metal-binding</keyword>
<keyword id="KW-0547">Nucleotide-binding</keyword>
<keyword id="KW-0658">Purine biosynthesis</keyword>
<feature type="chain" id="PRO_1000194828" description="Phosphoribosylformylglycinamidine synthase subunit PurL">
    <location>
        <begin position="1"/>
        <end position="748"/>
    </location>
</feature>
<feature type="active site" evidence="1">
    <location>
        <position position="47"/>
    </location>
</feature>
<feature type="active site" description="Proton acceptor" evidence="1">
    <location>
        <position position="94"/>
    </location>
</feature>
<feature type="binding site" evidence="1">
    <location>
        <position position="50"/>
    </location>
    <ligand>
        <name>ATP</name>
        <dbReference type="ChEBI" id="CHEBI:30616"/>
    </ligand>
</feature>
<feature type="binding site" evidence="1">
    <location>
        <position position="90"/>
    </location>
    <ligand>
        <name>ATP</name>
        <dbReference type="ChEBI" id="CHEBI:30616"/>
    </ligand>
</feature>
<feature type="binding site" evidence="1">
    <location>
        <position position="92"/>
    </location>
    <ligand>
        <name>Mg(2+)</name>
        <dbReference type="ChEBI" id="CHEBI:18420"/>
        <label>1</label>
    </ligand>
</feature>
<feature type="binding site" evidence="1">
    <location>
        <begin position="93"/>
        <end position="96"/>
    </location>
    <ligand>
        <name>substrate</name>
    </ligand>
</feature>
<feature type="binding site" evidence="1">
    <location>
        <position position="115"/>
    </location>
    <ligand>
        <name>substrate</name>
    </ligand>
</feature>
<feature type="binding site" evidence="1">
    <location>
        <position position="116"/>
    </location>
    <ligand>
        <name>Mg(2+)</name>
        <dbReference type="ChEBI" id="CHEBI:18420"/>
        <label>2</label>
    </ligand>
</feature>
<feature type="binding site" evidence="1">
    <location>
        <position position="240"/>
    </location>
    <ligand>
        <name>substrate</name>
    </ligand>
</feature>
<feature type="binding site" evidence="1">
    <location>
        <position position="268"/>
    </location>
    <ligand>
        <name>Mg(2+)</name>
        <dbReference type="ChEBI" id="CHEBI:18420"/>
        <label>2</label>
    </ligand>
</feature>
<feature type="binding site" evidence="1">
    <location>
        <begin position="312"/>
        <end position="314"/>
    </location>
    <ligand>
        <name>substrate</name>
    </ligand>
</feature>
<feature type="binding site" evidence="1">
    <location>
        <position position="500"/>
    </location>
    <ligand>
        <name>ATP</name>
        <dbReference type="ChEBI" id="CHEBI:30616"/>
    </ligand>
</feature>
<feature type="binding site" evidence="1">
    <location>
        <position position="537"/>
    </location>
    <ligand>
        <name>ATP</name>
        <dbReference type="ChEBI" id="CHEBI:30616"/>
    </ligand>
</feature>
<feature type="binding site" evidence="1">
    <location>
        <position position="538"/>
    </location>
    <ligand>
        <name>Mg(2+)</name>
        <dbReference type="ChEBI" id="CHEBI:18420"/>
        <label>1</label>
    </ligand>
</feature>
<feature type="binding site" evidence="1">
    <location>
        <position position="540"/>
    </location>
    <ligand>
        <name>substrate</name>
    </ligand>
</feature>
<evidence type="ECO:0000255" key="1">
    <source>
        <dbReference type="HAMAP-Rule" id="MF_00420"/>
    </source>
</evidence>